<reference key="1">
    <citation type="journal article" date="2010" name="PLoS Genet.">
        <title>Genome sequence of the plant growth promoting endophytic bacterium Enterobacter sp. 638.</title>
        <authorList>
            <person name="Taghavi S."/>
            <person name="van der Lelie D."/>
            <person name="Hoffman A."/>
            <person name="Zhang Y.B."/>
            <person name="Walla M.D."/>
            <person name="Vangronsveld J."/>
            <person name="Newman L."/>
            <person name="Monchy S."/>
        </authorList>
    </citation>
    <scope>NUCLEOTIDE SEQUENCE [LARGE SCALE GENOMIC DNA]</scope>
    <source>
        <strain>638</strain>
    </source>
</reference>
<feature type="chain" id="PRO_1000061933" description="Altronate oxidoreductase">
    <location>
        <begin position="1"/>
        <end position="483"/>
    </location>
</feature>
<feature type="binding site" evidence="1">
    <location>
        <begin position="18"/>
        <end position="29"/>
    </location>
    <ligand>
        <name>NAD(+)</name>
        <dbReference type="ChEBI" id="CHEBI:57540"/>
    </ligand>
</feature>
<proteinExistence type="inferred from homology"/>
<comment type="catalytic activity">
    <reaction evidence="1">
        <text>D-altronate + NAD(+) = keto-D-tagaturonate + NADH + H(+)</text>
        <dbReference type="Rhea" id="RHEA:17813"/>
        <dbReference type="ChEBI" id="CHEBI:15378"/>
        <dbReference type="ChEBI" id="CHEBI:17360"/>
        <dbReference type="ChEBI" id="CHEBI:17886"/>
        <dbReference type="ChEBI" id="CHEBI:57540"/>
        <dbReference type="ChEBI" id="CHEBI:57945"/>
        <dbReference type="EC" id="1.1.1.58"/>
    </reaction>
</comment>
<comment type="pathway">
    <text evidence="1">Carbohydrate metabolism; pentose and glucuronate interconversion.</text>
</comment>
<comment type="similarity">
    <text evidence="1">Belongs to the mannitol dehydrogenase family. UxaB subfamily.</text>
</comment>
<sequence length="483" mass="54527">MNTLNRRDFPGALYPERIIQFGEGNFLRAFIDWQIDLLNEHTDLNSGVVIVRPIKSDFPPSLSVQDGLYTTIIRGLNEQGEAVSDARLIRSVNREISVYSQYDEFLKLAHNPDMRFVFSNTTEAGISYHAEDKFDDAPAVSYPAKLTRLLFERFSHFNGAADKGWVIIPCELIDYNGDALRELVLRYAQEWALPAEFTQWLNDANAFCSTLVDRIVTGYPRDEVTALETELGYHDGFLDTAEHFYLFVIQGPKSLASELRLDKLSLNVLIVDDIKPYKERKVAILNGAHTALVPVAFQAGLDTVGEAMNDAEVCAFVEKAIYQEIIPVLDLPKDELESFASAVTGRFRNPYIKHQLLSIALNGMTKYRTRILPQLLAGQKATGKLPARLTFALAALIAFYRGERNGESYPVQDDQHWLDRYQQLWAQHHDKQISTSELVKAVLSVSEHWEQDLTNVSGLVEQVTLDLDAILLQGMRAAVKQLC</sequence>
<gene>
    <name evidence="1" type="primary">uxaB</name>
    <name type="ordered locus">Ent638_2013</name>
</gene>
<name>UXAB_ENT38</name>
<keyword id="KW-0520">NAD</keyword>
<keyword id="KW-0560">Oxidoreductase</keyword>
<accession>A4WAF9</accession>
<protein>
    <recommendedName>
        <fullName evidence="1">Altronate oxidoreductase</fullName>
        <ecNumber evidence="1">1.1.1.58</ecNumber>
    </recommendedName>
    <alternativeName>
        <fullName evidence="1">Tagaturonate dehydrogenase</fullName>
    </alternativeName>
    <alternativeName>
        <fullName evidence="1">Tagaturonate reductase</fullName>
    </alternativeName>
</protein>
<evidence type="ECO:0000255" key="1">
    <source>
        <dbReference type="HAMAP-Rule" id="MF_00670"/>
    </source>
</evidence>
<organism>
    <name type="scientific">Enterobacter sp. (strain 638)</name>
    <dbReference type="NCBI Taxonomy" id="399742"/>
    <lineage>
        <taxon>Bacteria</taxon>
        <taxon>Pseudomonadati</taxon>
        <taxon>Pseudomonadota</taxon>
        <taxon>Gammaproteobacteria</taxon>
        <taxon>Enterobacterales</taxon>
        <taxon>Enterobacteriaceae</taxon>
        <taxon>Enterobacter</taxon>
    </lineage>
</organism>
<dbReference type="EC" id="1.1.1.58" evidence="1"/>
<dbReference type="EMBL" id="CP000653">
    <property type="protein sequence ID" value="ABP60689.1"/>
    <property type="molecule type" value="Genomic_DNA"/>
</dbReference>
<dbReference type="RefSeq" id="WP_012017404.1">
    <property type="nucleotide sequence ID" value="NC_009436.1"/>
</dbReference>
<dbReference type="SMR" id="A4WAF9"/>
<dbReference type="STRING" id="399742.Ent638_2013"/>
<dbReference type="KEGG" id="ent:Ent638_2013"/>
<dbReference type="eggNOG" id="COG0246">
    <property type="taxonomic scope" value="Bacteria"/>
</dbReference>
<dbReference type="HOGENOM" id="CLU_027324_1_0_6"/>
<dbReference type="OrthoDB" id="9768714at2"/>
<dbReference type="UniPathway" id="UPA00246"/>
<dbReference type="Proteomes" id="UP000000230">
    <property type="component" value="Chromosome"/>
</dbReference>
<dbReference type="GO" id="GO:0005829">
    <property type="term" value="C:cytosol"/>
    <property type="evidence" value="ECO:0007669"/>
    <property type="project" value="TreeGrafter"/>
</dbReference>
<dbReference type="GO" id="GO:0008926">
    <property type="term" value="F:mannitol-1-phosphate 5-dehydrogenase activity"/>
    <property type="evidence" value="ECO:0007669"/>
    <property type="project" value="TreeGrafter"/>
</dbReference>
<dbReference type="GO" id="GO:0009026">
    <property type="term" value="F:tagaturonate reductase activity"/>
    <property type="evidence" value="ECO:0007669"/>
    <property type="project" value="UniProtKB-UniRule"/>
</dbReference>
<dbReference type="GO" id="GO:0019698">
    <property type="term" value="P:D-galacturonate catabolic process"/>
    <property type="evidence" value="ECO:0007669"/>
    <property type="project" value="TreeGrafter"/>
</dbReference>
<dbReference type="GO" id="GO:0019592">
    <property type="term" value="P:mannitol catabolic process"/>
    <property type="evidence" value="ECO:0007669"/>
    <property type="project" value="TreeGrafter"/>
</dbReference>
<dbReference type="FunFam" id="1.10.1040.10:FF:000018">
    <property type="entry name" value="Altronate oxidoreductase"/>
    <property type="match status" value="1"/>
</dbReference>
<dbReference type="FunFam" id="3.40.50.720:FF:000153">
    <property type="entry name" value="Altronate oxidoreductase"/>
    <property type="match status" value="1"/>
</dbReference>
<dbReference type="Gene3D" id="1.10.1040.10">
    <property type="entry name" value="N-(1-d-carboxylethyl)-l-norvaline Dehydrogenase, domain 2"/>
    <property type="match status" value="1"/>
</dbReference>
<dbReference type="Gene3D" id="3.40.50.720">
    <property type="entry name" value="NAD(P)-binding Rossmann-like Domain"/>
    <property type="match status" value="1"/>
</dbReference>
<dbReference type="HAMAP" id="MF_00670">
    <property type="entry name" value="Altron_oxidoreduct"/>
    <property type="match status" value="1"/>
</dbReference>
<dbReference type="InterPro" id="IPR008927">
    <property type="entry name" value="6-PGluconate_DH-like_C_sf"/>
</dbReference>
<dbReference type="InterPro" id="IPR013328">
    <property type="entry name" value="6PGD_dom2"/>
</dbReference>
<dbReference type="InterPro" id="IPR023668">
    <property type="entry name" value="Altronate_OxRdtase"/>
</dbReference>
<dbReference type="InterPro" id="IPR013118">
    <property type="entry name" value="Mannitol_DH_C"/>
</dbReference>
<dbReference type="InterPro" id="IPR013131">
    <property type="entry name" value="Mannitol_DH_N"/>
</dbReference>
<dbReference type="InterPro" id="IPR036291">
    <property type="entry name" value="NAD(P)-bd_dom_sf"/>
</dbReference>
<dbReference type="NCBIfam" id="NF002969">
    <property type="entry name" value="PRK03643.1"/>
    <property type="match status" value="1"/>
</dbReference>
<dbReference type="PANTHER" id="PTHR30524:SF0">
    <property type="entry name" value="ALTRONATE OXIDOREDUCTASE-RELATED"/>
    <property type="match status" value="1"/>
</dbReference>
<dbReference type="PANTHER" id="PTHR30524">
    <property type="entry name" value="MANNITOL-1-PHOSPHATE 5-DEHYDROGENASE"/>
    <property type="match status" value="1"/>
</dbReference>
<dbReference type="Pfam" id="PF01232">
    <property type="entry name" value="Mannitol_dh"/>
    <property type="match status" value="1"/>
</dbReference>
<dbReference type="Pfam" id="PF08125">
    <property type="entry name" value="Mannitol_dh_C"/>
    <property type="match status" value="1"/>
</dbReference>
<dbReference type="SUPFAM" id="SSF48179">
    <property type="entry name" value="6-phosphogluconate dehydrogenase C-terminal domain-like"/>
    <property type="match status" value="1"/>
</dbReference>
<dbReference type="SUPFAM" id="SSF51735">
    <property type="entry name" value="NAD(P)-binding Rossmann-fold domains"/>
    <property type="match status" value="1"/>
</dbReference>